<name>RNAS1_CHINI</name>
<comment type="function">
    <text evidence="1">Endonuclease that catalyzes the cleavage of RNA on the 3' side of pyrimidine nucleotides. Acts on single-stranded and double-stranded RNA (By similarity).</text>
</comment>
<comment type="catalytic activity">
    <reaction>
        <text>an [RNA] containing cytidine + H2O = an [RNA]-3'-cytidine-3'-phosphate + a 5'-hydroxy-ribonucleotide-3'-[RNA].</text>
        <dbReference type="EC" id="4.6.1.18"/>
    </reaction>
</comment>
<comment type="catalytic activity">
    <reaction>
        <text>an [RNA] containing uridine + H2O = an [RNA]-3'-uridine-3'-phosphate + a 5'-hydroxy-ribonucleotide-3'-[RNA].</text>
        <dbReference type="EC" id="4.6.1.18"/>
    </reaction>
</comment>
<comment type="subunit">
    <text evidence="1">Monomer. Interacts with and forms tight 1:1 complexes with RNH1. Dimerization of two such complexes may occur. Interaction with RNH1 inhibits this protein (By similarity).</text>
</comment>
<comment type="subcellular location">
    <subcellularLocation>
        <location>Secreted</location>
    </subcellularLocation>
</comment>
<comment type="tissue specificity">
    <text>Pancreas.</text>
</comment>
<comment type="similarity">
    <text evidence="3">Belongs to the pancreatic ribonuclease family.</text>
</comment>
<dbReference type="EC" id="4.6.1.18"/>
<dbReference type="EMBL" id="AJ005768">
    <property type="protein sequence ID" value="CAB41481.1"/>
    <property type="molecule type" value="Genomic_DNA"/>
</dbReference>
<dbReference type="SMR" id="Q9WUV3"/>
<dbReference type="GlyCosmos" id="Q9WUV3">
    <property type="glycosylation" value="2 sites, No reported glycans"/>
</dbReference>
<dbReference type="GO" id="GO:0005576">
    <property type="term" value="C:extracellular region"/>
    <property type="evidence" value="ECO:0007669"/>
    <property type="project" value="UniProtKB-SubCell"/>
</dbReference>
<dbReference type="GO" id="GO:0016829">
    <property type="term" value="F:lyase activity"/>
    <property type="evidence" value="ECO:0007669"/>
    <property type="project" value="UniProtKB-KW"/>
</dbReference>
<dbReference type="GO" id="GO:0003676">
    <property type="term" value="F:nucleic acid binding"/>
    <property type="evidence" value="ECO:0007669"/>
    <property type="project" value="InterPro"/>
</dbReference>
<dbReference type="GO" id="GO:0004522">
    <property type="term" value="F:ribonuclease A activity"/>
    <property type="evidence" value="ECO:0007669"/>
    <property type="project" value="UniProtKB-EC"/>
</dbReference>
<dbReference type="GO" id="GO:0050830">
    <property type="term" value="P:defense response to Gram-positive bacterium"/>
    <property type="evidence" value="ECO:0007669"/>
    <property type="project" value="TreeGrafter"/>
</dbReference>
<dbReference type="CDD" id="cd06265">
    <property type="entry name" value="RNase_A_canonical"/>
    <property type="match status" value="1"/>
</dbReference>
<dbReference type="FunFam" id="3.10.130.10:FF:000001">
    <property type="entry name" value="Ribonuclease pancreatic"/>
    <property type="match status" value="1"/>
</dbReference>
<dbReference type="Gene3D" id="3.10.130.10">
    <property type="entry name" value="Ribonuclease A-like domain"/>
    <property type="match status" value="1"/>
</dbReference>
<dbReference type="InterPro" id="IPR001427">
    <property type="entry name" value="RNaseA"/>
</dbReference>
<dbReference type="InterPro" id="IPR036816">
    <property type="entry name" value="RNaseA-like_dom_sf"/>
</dbReference>
<dbReference type="InterPro" id="IPR023411">
    <property type="entry name" value="RNaseA_AS"/>
</dbReference>
<dbReference type="InterPro" id="IPR023412">
    <property type="entry name" value="RNaseA_domain"/>
</dbReference>
<dbReference type="PANTHER" id="PTHR11437">
    <property type="entry name" value="RIBONUCLEASE"/>
    <property type="match status" value="1"/>
</dbReference>
<dbReference type="PANTHER" id="PTHR11437:SF24">
    <property type="entry name" value="RIBONUCLEASE PANCREATIC"/>
    <property type="match status" value="1"/>
</dbReference>
<dbReference type="Pfam" id="PF00074">
    <property type="entry name" value="RnaseA"/>
    <property type="match status" value="1"/>
</dbReference>
<dbReference type="PRINTS" id="PR00794">
    <property type="entry name" value="RIBONUCLEASE"/>
</dbReference>
<dbReference type="SMART" id="SM00092">
    <property type="entry name" value="RNAse_Pc"/>
    <property type="match status" value="1"/>
</dbReference>
<dbReference type="SUPFAM" id="SSF54076">
    <property type="entry name" value="RNase A-like"/>
    <property type="match status" value="1"/>
</dbReference>
<dbReference type="PROSITE" id="PS00127">
    <property type="entry name" value="RNASE_PANCREATIC"/>
    <property type="match status" value="1"/>
</dbReference>
<sequence>MGLEKSLILLPLLVLVFGWVQSSLGKETSAQKFERHDMDSTGSSSSATYCNQMMKRRNMTQGYCKPVNTFVHEPQTAVHAVCSQKNVTCKNGNSNCYKSHSALHITDCRLKGNSKYPNCDYQTNQLQKHIIIACEGNPFVPVHFDASV</sequence>
<evidence type="ECO:0000250" key="1"/>
<evidence type="ECO:0000255" key="2"/>
<evidence type="ECO:0000305" key="3"/>
<accession>Q9WUV3</accession>
<reference key="1">
    <citation type="journal article" date="1999" name="Mol. Phylogenet. Evol.">
        <title>The phylogenetic position of 'Acomyinae' (Rodentia, Mammalia) as sister group of a Murinae + Gerbillinae clade: evidence from the nuclear ribonuclease gene.</title>
        <authorList>
            <person name="Dubois J.-Y.F."/>
            <person name="Catzeflis F.M."/>
            <person name="Beintema J.J."/>
        </authorList>
    </citation>
    <scope>NUCLEOTIDE SEQUENCE [GENOMIC DNA]</scope>
</reference>
<gene>
    <name type="primary">RNASE1</name>
</gene>
<organism>
    <name type="scientific">Chionomys nivalis</name>
    <name type="common">European snow vole</name>
    <name type="synonym">Microtus nivalis</name>
    <dbReference type="NCBI Taxonomy" id="269649"/>
    <lineage>
        <taxon>Eukaryota</taxon>
        <taxon>Metazoa</taxon>
        <taxon>Chordata</taxon>
        <taxon>Craniata</taxon>
        <taxon>Vertebrata</taxon>
        <taxon>Euteleostomi</taxon>
        <taxon>Mammalia</taxon>
        <taxon>Eutheria</taxon>
        <taxon>Euarchontoglires</taxon>
        <taxon>Glires</taxon>
        <taxon>Rodentia</taxon>
        <taxon>Myomorpha</taxon>
        <taxon>Muroidea</taxon>
        <taxon>Cricetidae</taxon>
        <taxon>Arvicolinae</taxon>
        <taxon>Chionomys</taxon>
    </lineage>
</organism>
<protein>
    <recommendedName>
        <fullName>Ribonuclease pancreatic</fullName>
        <ecNumber>4.6.1.18</ecNumber>
    </recommendedName>
    <alternativeName>
        <fullName>RNase 1</fullName>
    </alternativeName>
    <alternativeName>
        <fullName>RNase A</fullName>
    </alternativeName>
</protein>
<keyword id="KW-1015">Disulfide bond</keyword>
<keyword id="KW-0255">Endonuclease</keyword>
<keyword id="KW-0325">Glycoprotein</keyword>
<keyword id="KW-0378">Hydrolase</keyword>
<keyword id="KW-0456">Lyase</keyword>
<keyword id="KW-0540">Nuclease</keyword>
<keyword id="KW-0964">Secreted</keyword>
<keyword id="KW-0732">Signal</keyword>
<feature type="signal peptide" evidence="2">
    <location>
        <begin position="1"/>
        <end position="25"/>
    </location>
</feature>
<feature type="chain" id="PRO_0000030927" description="Ribonuclease pancreatic">
    <location>
        <begin position="26"/>
        <end position="148"/>
    </location>
</feature>
<feature type="active site" description="Proton acceptor" evidence="1">
    <location>
        <position position="36"/>
    </location>
</feature>
<feature type="active site" description="Proton donor" evidence="1">
    <location>
        <position position="143"/>
    </location>
</feature>
<feature type="binding site" evidence="1">
    <location>
        <position position="32"/>
    </location>
    <ligand>
        <name>substrate</name>
    </ligand>
</feature>
<feature type="binding site" evidence="1">
    <location>
        <position position="35"/>
    </location>
    <ligand>
        <name>substrate</name>
    </ligand>
</feature>
<feature type="binding site" evidence="1">
    <location>
        <begin position="65"/>
        <end position="69"/>
    </location>
    <ligand>
        <name>substrate</name>
    </ligand>
</feature>
<feature type="binding site" evidence="1">
    <location>
        <position position="90"/>
    </location>
    <ligand>
        <name>substrate</name>
    </ligand>
</feature>
<feature type="binding site" evidence="1">
    <location>
        <position position="109"/>
    </location>
    <ligand>
        <name>substrate</name>
    </ligand>
</feature>
<feature type="glycosylation site" description="N-linked (GlcNAc...) asparagine" evidence="2">
    <location>
        <position position="58"/>
    </location>
</feature>
<feature type="glycosylation site" description="N-linked (GlcNAc...) asparagine" evidence="2">
    <location>
        <position position="86"/>
    </location>
</feature>
<feature type="disulfide bond" evidence="1">
    <location>
        <begin position="50"/>
        <end position="108"/>
    </location>
</feature>
<feature type="disulfide bond" evidence="1">
    <location>
        <begin position="64"/>
        <end position="119"/>
    </location>
</feature>
<feature type="disulfide bond" evidence="1">
    <location>
        <begin position="82"/>
        <end position="134"/>
    </location>
</feature>
<feature type="disulfide bond" evidence="1">
    <location>
        <begin position="89"/>
        <end position="96"/>
    </location>
</feature>
<proteinExistence type="evidence at transcript level"/>